<accession>B7NDI9</accession>
<comment type="function">
    <text evidence="1">Modulates the synthesis of GlmS, by affecting the processing and stability of the regulatory small RNA GlmZ. When glucosamine-6-phosphate (GlcN6P) concentrations are high in the cell, RapZ binds GlmZ and targets it to cleavage by RNase E. Consequently, GlmZ is inactivated and unable to activate GlmS synthesis. Under low GlcN6P concentrations, RapZ is sequestered and inactivated by an other regulatory small RNA, GlmY, preventing GlmZ degradation and leading to synthesis of GlmS.</text>
</comment>
<comment type="subunit">
    <text evidence="1">Homotrimer.</text>
</comment>
<comment type="similarity">
    <text evidence="1">Belongs to the RapZ-like family. RapZ subfamily.</text>
</comment>
<name>RAPZ_ECOLU</name>
<sequence length="284" mass="32492">MVLMIVSGRSGSGKSVALRALEDMGFYCVDNLPVVLLPDLARTLADREISAAVSIDVRNMPESPEIFEQAMSNLPDAFSPQLLFLDADRNTLIRRYSDTRRLHPLSSKNLSLESAIDKESDLLEPLRSRADLIVDTSEMSVHELAEMLRTRLLGKRERELTMVFESFGFKHGIPIDADYVFDVRFLPNPHWDPKLRPMTGLDKPVAAFLDRHTEVHNFIYQTRSYLELWLPMLETNNRSYLTVAIGCTGGKHRSVYIAEQLADYFRSRGKNVQSRHRTLEKRKP</sequence>
<keyword id="KW-0067">ATP-binding</keyword>
<keyword id="KW-0342">GTP-binding</keyword>
<keyword id="KW-0547">Nucleotide-binding</keyword>
<keyword id="KW-0694">RNA-binding</keyword>
<dbReference type="EMBL" id="CU928163">
    <property type="protein sequence ID" value="CAR14839.1"/>
    <property type="molecule type" value="Genomic_DNA"/>
</dbReference>
<dbReference type="RefSeq" id="WP_000243741.1">
    <property type="nucleotide sequence ID" value="NC_011751.1"/>
</dbReference>
<dbReference type="RefSeq" id="YP_002414344.1">
    <property type="nucleotide sequence ID" value="NC_011751.1"/>
</dbReference>
<dbReference type="SMR" id="B7NDI9"/>
<dbReference type="STRING" id="585056.ECUMN_3685"/>
<dbReference type="GeneID" id="93778776"/>
<dbReference type="KEGG" id="eum:ECUMN_3685"/>
<dbReference type="PATRIC" id="fig|585056.7.peg.3865"/>
<dbReference type="HOGENOM" id="CLU_059558_1_1_6"/>
<dbReference type="Proteomes" id="UP000007097">
    <property type="component" value="Chromosome"/>
</dbReference>
<dbReference type="GO" id="GO:0005524">
    <property type="term" value="F:ATP binding"/>
    <property type="evidence" value="ECO:0007669"/>
    <property type="project" value="UniProtKB-UniRule"/>
</dbReference>
<dbReference type="GO" id="GO:0005525">
    <property type="term" value="F:GTP binding"/>
    <property type="evidence" value="ECO:0007669"/>
    <property type="project" value="UniProtKB-UniRule"/>
</dbReference>
<dbReference type="GO" id="GO:0003723">
    <property type="term" value="F:RNA binding"/>
    <property type="evidence" value="ECO:0007669"/>
    <property type="project" value="UniProtKB-KW"/>
</dbReference>
<dbReference type="Gene3D" id="3.40.50.300">
    <property type="entry name" value="P-loop containing nucleotide triphosphate hydrolases"/>
    <property type="match status" value="1"/>
</dbReference>
<dbReference type="HAMAP" id="MF_00636">
    <property type="entry name" value="RapZ_like"/>
    <property type="match status" value="1"/>
</dbReference>
<dbReference type="InterPro" id="IPR027417">
    <property type="entry name" value="P-loop_NTPase"/>
</dbReference>
<dbReference type="InterPro" id="IPR005337">
    <property type="entry name" value="RapZ-like"/>
</dbReference>
<dbReference type="InterPro" id="IPR053930">
    <property type="entry name" value="RapZ-like_N"/>
</dbReference>
<dbReference type="InterPro" id="IPR053931">
    <property type="entry name" value="RapZ_C"/>
</dbReference>
<dbReference type="NCBIfam" id="NF003828">
    <property type="entry name" value="PRK05416.1"/>
    <property type="match status" value="1"/>
</dbReference>
<dbReference type="PANTHER" id="PTHR30448">
    <property type="entry name" value="RNASE ADAPTER PROTEIN RAPZ"/>
    <property type="match status" value="1"/>
</dbReference>
<dbReference type="PANTHER" id="PTHR30448:SF0">
    <property type="entry name" value="RNASE ADAPTER PROTEIN RAPZ"/>
    <property type="match status" value="1"/>
</dbReference>
<dbReference type="Pfam" id="PF22740">
    <property type="entry name" value="PapZ_C"/>
    <property type="match status" value="1"/>
</dbReference>
<dbReference type="Pfam" id="PF03668">
    <property type="entry name" value="RapZ-like_N"/>
    <property type="match status" value="1"/>
</dbReference>
<dbReference type="PIRSF" id="PIRSF005052">
    <property type="entry name" value="P-loopkin"/>
    <property type="match status" value="1"/>
</dbReference>
<dbReference type="SUPFAM" id="SSF52540">
    <property type="entry name" value="P-loop containing nucleoside triphosphate hydrolases"/>
    <property type="match status" value="1"/>
</dbReference>
<organism>
    <name type="scientific">Escherichia coli O17:K52:H18 (strain UMN026 / ExPEC)</name>
    <dbReference type="NCBI Taxonomy" id="585056"/>
    <lineage>
        <taxon>Bacteria</taxon>
        <taxon>Pseudomonadati</taxon>
        <taxon>Pseudomonadota</taxon>
        <taxon>Gammaproteobacteria</taxon>
        <taxon>Enterobacterales</taxon>
        <taxon>Enterobacteriaceae</taxon>
        <taxon>Escherichia</taxon>
    </lineage>
</organism>
<evidence type="ECO:0000255" key="1">
    <source>
        <dbReference type="HAMAP-Rule" id="MF_00636"/>
    </source>
</evidence>
<gene>
    <name evidence="1" type="primary">rapZ</name>
    <name type="ordered locus">ECUMN_3685</name>
</gene>
<feature type="chain" id="PRO_1000130753" description="RNase adapter protein RapZ">
    <location>
        <begin position="1"/>
        <end position="284"/>
    </location>
</feature>
<feature type="region of interest" description="RNA-binding" evidence="1">
    <location>
        <begin position="266"/>
        <end position="284"/>
    </location>
</feature>
<feature type="binding site" evidence="1">
    <location>
        <begin position="8"/>
        <end position="15"/>
    </location>
    <ligand>
        <name>ATP</name>
        <dbReference type="ChEBI" id="CHEBI:30616"/>
    </ligand>
</feature>
<feature type="binding site" evidence="1">
    <location>
        <begin position="56"/>
        <end position="59"/>
    </location>
    <ligand>
        <name>GTP</name>
        <dbReference type="ChEBI" id="CHEBI:37565"/>
    </ligand>
</feature>
<protein>
    <recommendedName>
        <fullName evidence="1">RNase adapter protein RapZ</fullName>
    </recommendedName>
</protein>
<reference key="1">
    <citation type="journal article" date="2009" name="PLoS Genet.">
        <title>Organised genome dynamics in the Escherichia coli species results in highly diverse adaptive paths.</title>
        <authorList>
            <person name="Touchon M."/>
            <person name="Hoede C."/>
            <person name="Tenaillon O."/>
            <person name="Barbe V."/>
            <person name="Baeriswyl S."/>
            <person name="Bidet P."/>
            <person name="Bingen E."/>
            <person name="Bonacorsi S."/>
            <person name="Bouchier C."/>
            <person name="Bouvet O."/>
            <person name="Calteau A."/>
            <person name="Chiapello H."/>
            <person name="Clermont O."/>
            <person name="Cruveiller S."/>
            <person name="Danchin A."/>
            <person name="Diard M."/>
            <person name="Dossat C."/>
            <person name="Karoui M.E."/>
            <person name="Frapy E."/>
            <person name="Garry L."/>
            <person name="Ghigo J.M."/>
            <person name="Gilles A.M."/>
            <person name="Johnson J."/>
            <person name="Le Bouguenec C."/>
            <person name="Lescat M."/>
            <person name="Mangenot S."/>
            <person name="Martinez-Jehanne V."/>
            <person name="Matic I."/>
            <person name="Nassif X."/>
            <person name="Oztas S."/>
            <person name="Petit M.A."/>
            <person name="Pichon C."/>
            <person name="Rouy Z."/>
            <person name="Ruf C.S."/>
            <person name="Schneider D."/>
            <person name="Tourret J."/>
            <person name="Vacherie B."/>
            <person name="Vallenet D."/>
            <person name="Medigue C."/>
            <person name="Rocha E.P.C."/>
            <person name="Denamur E."/>
        </authorList>
    </citation>
    <scope>NUCLEOTIDE SEQUENCE [LARGE SCALE GENOMIC DNA]</scope>
    <source>
        <strain>UMN026 / ExPEC</strain>
    </source>
</reference>
<proteinExistence type="inferred from homology"/>